<comment type="function">
    <text evidence="1 2">Catalyzes a mechanistically unusual reaction, the ATP-dependent insertion of CO2 between the N7 and N8 nitrogen atoms of 7,8-diaminopelargonic acid (DAPA, also called 7,8-diammoniononanoate) to form a ureido ring (By similarity). This cyanobacterium does not encode bioA (which catalyzes the formation of the precursor for this reaction in the cannonical pathway), instead it encodes bioU, which replaces bioA and also performs the first half of the cannonical BioD reaction. Thus in this bacteria BioD has a different substrate. In Synechocystis replacement of bioU by bioA from E.coli leads to biotin synthesis, showing BioD can use the 'cannonical' 7,8-diammoniononanoate as a substrate (PubMed:32042199).</text>
</comment>
<comment type="catalytic activity">
    <reaction evidence="1 4">
        <text>(7R,8S)-7,8-diammoniononanoate + CO2 + ATP = (4R,5S)-dethiobiotin + ADP + phosphate + 3 H(+)</text>
        <dbReference type="Rhea" id="RHEA:15805"/>
        <dbReference type="ChEBI" id="CHEBI:15378"/>
        <dbReference type="ChEBI" id="CHEBI:16526"/>
        <dbReference type="ChEBI" id="CHEBI:30616"/>
        <dbReference type="ChEBI" id="CHEBI:43474"/>
        <dbReference type="ChEBI" id="CHEBI:149469"/>
        <dbReference type="ChEBI" id="CHEBI:149473"/>
        <dbReference type="ChEBI" id="CHEBI:456216"/>
        <dbReference type="EC" id="6.3.3.3"/>
    </reaction>
</comment>
<comment type="catalytic activity">
    <reaction evidence="2">
        <text>(7R,8S)-8-amino-7-(carboxyamino)nonanoate + ATP = (4R,5S)-dethiobiotin + ADP + phosphate + H(+)</text>
        <dbReference type="Rhea" id="RHEA:63684"/>
        <dbReference type="ChEBI" id="CHEBI:15378"/>
        <dbReference type="ChEBI" id="CHEBI:30616"/>
        <dbReference type="ChEBI" id="CHEBI:43474"/>
        <dbReference type="ChEBI" id="CHEBI:149470"/>
        <dbReference type="ChEBI" id="CHEBI:149473"/>
        <dbReference type="ChEBI" id="CHEBI:456216"/>
    </reaction>
</comment>
<comment type="cofactor">
    <cofactor evidence="1">
        <name>Mg(2+)</name>
        <dbReference type="ChEBI" id="CHEBI:18420"/>
    </cofactor>
</comment>
<comment type="pathway">
    <text evidence="1">Cofactor biosynthesis; biotin biosynthesis; biotin from 7,8-diaminononanoate: step 1/2.</text>
</comment>
<comment type="subunit">
    <text evidence="1">Homodimer.</text>
</comment>
<comment type="subcellular location">
    <subcellularLocation>
        <location evidence="1">Cytoplasm</location>
    </subcellularLocation>
</comment>
<comment type="similarity">
    <text evidence="1">Belongs to the dethiobiotin synthetase family.</text>
</comment>
<gene>
    <name evidence="1" type="primary">bioD</name>
    <name type="ordered locus">slr0523</name>
</gene>
<feature type="chain" id="PRO_0000187992" description="ATP-dependent dethiobiotin synthetase BioD">
    <location>
        <begin position="1"/>
        <end position="237"/>
    </location>
</feature>
<feature type="active site" evidence="1">
    <location>
        <position position="48"/>
    </location>
</feature>
<feature type="binding site" evidence="1 3">
    <location>
        <begin position="21"/>
        <end position="26"/>
    </location>
    <ligand>
        <name>ATP</name>
        <dbReference type="ChEBI" id="CHEBI:30616"/>
    </ligand>
</feature>
<feature type="binding site" evidence="1">
    <location>
        <position position="25"/>
    </location>
    <ligand>
        <name>Mg(2+)</name>
        <dbReference type="ChEBI" id="CHEBI:18420"/>
    </ligand>
</feature>
<feature type="binding site" evidence="1">
    <location>
        <position position="52"/>
    </location>
    <ligand>
        <name>substrate</name>
    </ligand>
</feature>
<feature type="binding site" evidence="1">
    <location>
        <position position="56"/>
    </location>
    <ligand>
        <name>ATP</name>
        <dbReference type="ChEBI" id="CHEBI:30616"/>
    </ligand>
</feature>
<feature type="binding site" evidence="1">
    <location>
        <position position="56"/>
    </location>
    <ligand>
        <name>Mg(2+)</name>
        <dbReference type="ChEBI" id="CHEBI:18420"/>
    </ligand>
</feature>
<feature type="binding site" evidence="1">
    <location>
        <begin position="117"/>
        <end position="120"/>
    </location>
    <ligand>
        <name>ATP</name>
        <dbReference type="ChEBI" id="CHEBI:30616"/>
    </ligand>
</feature>
<feature type="binding site" evidence="1">
    <location>
        <position position="117"/>
    </location>
    <ligand>
        <name>Mg(2+)</name>
        <dbReference type="ChEBI" id="CHEBI:18420"/>
    </ligand>
</feature>
<feature type="binding site" evidence="1">
    <location>
        <begin position="177"/>
        <end position="178"/>
    </location>
    <ligand>
        <name>ATP</name>
        <dbReference type="ChEBI" id="CHEBI:30616"/>
    </ligand>
</feature>
<feature type="binding site" evidence="1">
    <location>
        <begin position="209"/>
        <end position="211"/>
    </location>
    <ligand>
        <name>ATP</name>
        <dbReference type="ChEBI" id="CHEBI:30616"/>
    </ligand>
</feature>
<evidence type="ECO:0000255" key="1">
    <source>
        <dbReference type="HAMAP-Rule" id="MF_00336"/>
    </source>
</evidence>
<evidence type="ECO:0000269" key="2">
    <source>
    </source>
</evidence>
<evidence type="ECO:0000305" key="3"/>
<evidence type="ECO:0000305" key="4">
    <source>
    </source>
</evidence>
<organism>
    <name type="scientific">Synechocystis sp. (strain ATCC 27184 / PCC 6803 / Kazusa)</name>
    <dbReference type="NCBI Taxonomy" id="1111708"/>
    <lineage>
        <taxon>Bacteria</taxon>
        <taxon>Bacillati</taxon>
        <taxon>Cyanobacteriota</taxon>
        <taxon>Cyanophyceae</taxon>
        <taxon>Synechococcales</taxon>
        <taxon>Merismopediaceae</taxon>
        <taxon>Synechocystis</taxon>
    </lineage>
</organism>
<reference key="1">
    <citation type="journal article" date="1995" name="DNA Res.">
        <title>Sequence analysis of the genome of the unicellular cyanobacterium Synechocystis sp. strain PCC6803. I. Sequence features in the 1 Mb region from map positions 64% to 92% of the genome.</title>
        <authorList>
            <person name="Kaneko T."/>
            <person name="Tanaka A."/>
            <person name="Sato S."/>
            <person name="Kotani H."/>
            <person name="Sazuka T."/>
            <person name="Miyajima N."/>
            <person name="Sugiura M."/>
            <person name="Tabata S."/>
        </authorList>
    </citation>
    <scope>NUCLEOTIDE SEQUENCE [LARGE SCALE GENOMIC DNA]</scope>
    <source>
        <strain>ATCC 27184 / PCC 6803 / N-1</strain>
    </source>
</reference>
<reference key="2">
    <citation type="journal article" date="1996" name="DNA Res.">
        <title>Sequence analysis of the genome of the unicellular cyanobacterium Synechocystis sp. strain PCC6803. II. Sequence determination of the entire genome and assignment of potential protein-coding regions.</title>
        <authorList>
            <person name="Kaneko T."/>
            <person name="Sato S."/>
            <person name="Kotani H."/>
            <person name="Tanaka A."/>
            <person name="Asamizu E."/>
            <person name="Nakamura Y."/>
            <person name="Miyajima N."/>
            <person name="Hirosawa M."/>
            <person name="Sugiura M."/>
            <person name="Sasamoto S."/>
            <person name="Kimura T."/>
            <person name="Hosouchi T."/>
            <person name="Matsuno A."/>
            <person name="Muraki A."/>
            <person name="Nakazaki N."/>
            <person name="Naruo K."/>
            <person name="Okumura S."/>
            <person name="Shimpo S."/>
            <person name="Takeuchi C."/>
            <person name="Wada T."/>
            <person name="Watanabe A."/>
            <person name="Yamada M."/>
            <person name="Yasuda M."/>
            <person name="Tabata S."/>
        </authorList>
    </citation>
    <scope>NUCLEOTIDE SEQUENCE [LARGE SCALE GENOMIC DNA]</scope>
    <source>
        <strain>ATCC 27184 / PCC 6803 / Kazusa</strain>
    </source>
</reference>
<reference key="3">
    <citation type="journal article" date="2020" name="Nat. Chem. Biol.">
        <title>A suicide enzyme catalyzes multiple reactions for biotin biosynthesis in cyanobacteria.</title>
        <authorList>
            <person name="Sakaki K."/>
            <person name="Ohishi K."/>
            <person name="Shimizu T."/>
            <person name="Kobayashi I."/>
            <person name="Mori N."/>
            <person name="Matsuda K."/>
            <person name="Tomita T."/>
            <person name="Watanabe H."/>
            <person name="Tanaka K."/>
            <person name="Kuzuyama T."/>
            <person name="Nishiyama M."/>
        </authorList>
    </citation>
    <scope>FUNCTION</scope>
    <scope>CATALYTIC ACTIVITY</scope>
    <source>
        <strain>ATCC 27184 / PCC 6803 / Kazusa</strain>
    </source>
</reference>
<protein>
    <recommendedName>
        <fullName evidence="1">ATP-dependent dethiobiotin synthetase BioD</fullName>
        <ecNumber evidence="1">6.3.3.3</ecNumber>
    </recommendedName>
    <alternativeName>
        <fullName evidence="1">DTB synthetase</fullName>
        <shortName evidence="1">DTBS</shortName>
    </alternativeName>
    <alternativeName>
        <fullName evidence="1">Dethiobiotin synthase</fullName>
    </alternativeName>
</protein>
<dbReference type="EC" id="6.3.3.3" evidence="1"/>
<dbReference type="EMBL" id="BA000022">
    <property type="protein sequence ID" value="BAA10605.1"/>
    <property type="molecule type" value="Genomic_DNA"/>
</dbReference>
<dbReference type="PIR" id="S76661">
    <property type="entry name" value="S76661"/>
</dbReference>
<dbReference type="SMR" id="Q55849"/>
<dbReference type="FunCoup" id="Q55849">
    <property type="interactions" value="198"/>
</dbReference>
<dbReference type="IntAct" id="Q55849">
    <property type="interactions" value="2"/>
</dbReference>
<dbReference type="STRING" id="1148.gene:10500109"/>
<dbReference type="PaxDb" id="1148-1001767"/>
<dbReference type="EnsemblBacteria" id="BAA10605">
    <property type="protein sequence ID" value="BAA10605"/>
    <property type="gene ID" value="BAA10605"/>
</dbReference>
<dbReference type="KEGG" id="syn:slr0523"/>
<dbReference type="eggNOG" id="COG0132">
    <property type="taxonomic scope" value="Bacteria"/>
</dbReference>
<dbReference type="InParanoid" id="Q55849"/>
<dbReference type="PhylomeDB" id="Q55849"/>
<dbReference type="BioCyc" id="MetaCyc:MONOMER-21140"/>
<dbReference type="UniPathway" id="UPA00078">
    <property type="reaction ID" value="UER00161"/>
</dbReference>
<dbReference type="Proteomes" id="UP000001425">
    <property type="component" value="Chromosome"/>
</dbReference>
<dbReference type="GO" id="GO:0005829">
    <property type="term" value="C:cytosol"/>
    <property type="evidence" value="ECO:0000318"/>
    <property type="project" value="GO_Central"/>
</dbReference>
<dbReference type="GO" id="GO:0005524">
    <property type="term" value="F:ATP binding"/>
    <property type="evidence" value="ECO:0007669"/>
    <property type="project" value="UniProtKB-UniRule"/>
</dbReference>
<dbReference type="GO" id="GO:0004141">
    <property type="term" value="F:dethiobiotin synthase activity"/>
    <property type="evidence" value="ECO:0000318"/>
    <property type="project" value="GO_Central"/>
</dbReference>
<dbReference type="GO" id="GO:0000287">
    <property type="term" value="F:magnesium ion binding"/>
    <property type="evidence" value="ECO:0007669"/>
    <property type="project" value="UniProtKB-UniRule"/>
</dbReference>
<dbReference type="GO" id="GO:0009102">
    <property type="term" value="P:biotin biosynthetic process"/>
    <property type="evidence" value="ECO:0000318"/>
    <property type="project" value="GO_Central"/>
</dbReference>
<dbReference type="CDD" id="cd03109">
    <property type="entry name" value="DTBS"/>
    <property type="match status" value="1"/>
</dbReference>
<dbReference type="Gene3D" id="3.40.50.300">
    <property type="entry name" value="P-loop containing nucleotide triphosphate hydrolases"/>
    <property type="match status" value="1"/>
</dbReference>
<dbReference type="HAMAP" id="MF_00336">
    <property type="entry name" value="BioD"/>
    <property type="match status" value="1"/>
</dbReference>
<dbReference type="InterPro" id="IPR004472">
    <property type="entry name" value="DTB_synth_BioD"/>
</dbReference>
<dbReference type="InterPro" id="IPR027417">
    <property type="entry name" value="P-loop_NTPase"/>
</dbReference>
<dbReference type="NCBIfam" id="TIGR00347">
    <property type="entry name" value="bioD"/>
    <property type="match status" value="1"/>
</dbReference>
<dbReference type="PANTHER" id="PTHR43210:SF2">
    <property type="entry name" value="ATP-DEPENDENT DETHIOBIOTIN SYNTHETASE BIOD 2"/>
    <property type="match status" value="1"/>
</dbReference>
<dbReference type="PANTHER" id="PTHR43210">
    <property type="entry name" value="DETHIOBIOTIN SYNTHETASE"/>
    <property type="match status" value="1"/>
</dbReference>
<dbReference type="Pfam" id="PF13500">
    <property type="entry name" value="AAA_26"/>
    <property type="match status" value="1"/>
</dbReference>
<dbReference type="PIRSF" id="PIRSF006755">
    <property type="entry name" value="DTB_synth"/>
    <property type="match status" value="1"/>
</dbReference>
<dbReference type="SUPFAM" id="SSF52540">
    <property type="entry name" value="P-loop containing nucleoside triphosphate hydrolases"/>
    <property type="match status" value="1"/>
</dbReference>
<accession>Q55849</accession>
<proteinExistence type="evidence at protein level"/>
<keyword id="KW-0067">ATP-binding</keyword>
<keyword id="KW-0093">Biotin biosynthesis</keyword>
<keyword id="KW-0963">Cytoplasm</keyword>
<keyword id="KW-0436">Ligase</keyword>
<keyword id="KW-0460">Magnesium</keyword>
<keyword id="KW-0479">Metal-binding</keyword>
<keyword id="KW-0547">Nucleotide-binding</keyword>
<keyword id="KW-1185">Reference proteome</keyword>
<sequence length="237" mass="25805">MSNFSRAVDQKTLLVAGCDTGVGKTVTTSALAAYWWKCGKDQSFGLMKLMQTGLGDDELYQQLFGHLTRWDVVTPLKFATPLAPPLAADQEGKTIDLGVVWQTLQTMQQNHDHVLVEALGSLGSPVTHELTVADIAALWRLETILVVPVQLGAMGQAIAQVALARQTKVKLKGLVLSCASPEAEGKVEDWATPAMLESFTHLPVLGIVPYLTESERENLSRLAEITARFGLEKLAYF</sequence>
<name>BIOD_SYNY3</name>